<reference key="1">
    <citation type="journal article" date="2000" name="Science">
        <title>The genome sequence of Drosophila melanogaster.</title>
        <authorList>
            <person name="Adams M.D."/>
            <person name="Celniker S.E."/>
            <person name="Holt R.A."/>
            <person name="Evans C.A."/>
            <person name="Gocayne J.D."/>
            <person name="Amanatides P.G."/>
            <person name="Scherer S.E."/>
            <person name="Li P.W."/>
            <person name="Hoskins R.A."/>
            <person name="Galle R.F."/>
            <person name="George R.A."/>
            <person name="Lewis S.E."/>
            <person name="Richards S."/>
            <person name="Ashburner M."/>
            <person name="Henderson S.N."/>
            <person name="Sutton G.G."/>
            <person name="Wortman J.R."/>
            <person name="Yandell M.D."/>
            <person name="Zhang Q."/>
            <person name="Chen L.X."/>
            <person name="Brandon R.C."/>
            <person name="Rogers Y.-H.C."/>
            <person name="Blazej R.G."/>
            <person name="Champe M."/>
            <person name="Pfeiffer B.D."/>
            <person name="Wan K.H."/>
            <person name="Doyle C."/>
            <person name="Baxter E.G."/>
            <person name="Helt G."/>
            <person name="Nelson C.R."/>
            <person name="Miklos G.L.G."/>
            <person name="Abril J.F."/>
            <person name="Agbayani A."/>
            <person name="An H.-J."/>
            <person name="Andrews-Pfannkoch C."/>
            <person name="Baldwin D."/>
            <person name="Ballew R.M."/>
            <person name="Basu A."/>
            <person name="Baxendale J."/>
            <person name="Bayraktaroglu L."/>
            <person name="Beasley E.M."/>
            <person name="Beeson K.Y."/>
            <person name="Benos P.V."/>
            <person name="Berman B.P."/>
            <person name="Bhandari D."/>
            <person name="Bolshakov S."/>
            <person name="Borkova D."/>
            <person name="Botchan M.R."/>
            <person name="Bouck J."/>
            <person name="Brokstein P."/>
            <person name="Brottier P."/>
            <person name="Burtis K.C."/>
            <person name="Busam D.A."/>
            <person name="Butler H."/>
            <person name="Cadieu E."/>
            <person name="Center A."/>
            <person name="Chandra I."/>
            <person name="Cherry J.M."/>
            <person name="Cawley S."/>
            <person name="Dahlke C."/>
            <person name="Davenport L.B."/>
            <person name="Davies P."/>
            <person name="de Pablos B."/>
            <person name="Delcher A."/>
            <person name="Deng Z."/>
            <person name="Mays A.D."/>
            <person name="Dew I."/>
            <person name="Dietz S.M."/>
            <person name="Dodson K."/>
            <person name="Doup L.E."/>
            <person name="Downes M."/>
            <person name="Dugan-Rocha S."/>
            <person name="Dunkov B.C."/>
            <person name="Dunn P."/>
            <person name="Durbin K.J."/>
            <person name="Evangelista C.C."/>
            <person name="Ferraz C."/>
            <person name="Ferriera S."/>
            <person name="Fleischmann W."/>
            <person name="Fosler C."/>
            <person name="Gabrielian A.E."/>
            <person name="Garg N.S."/>
            <person name="Gelbart W.M."/>
            <person name="Glasser K."/>
            <person name="Glodek A."/>
            <person name="Gong F."/>
            <person name="Gorrell J.H."/>
            <person name="Gu Z."/>
            <person name="Guan P."/>
            <person name="Harris M."/>
            <person name="Harris N.L."/>
            <person name="Harvey D.A."/>
            <person name="Heiman T.J."/>
            <person name="Hernandez J.R."/>
            <person name="Houck J."/>
            <person name="Hostin D."/>
            <person name="Houston K.A."/>
            <person name="Howland T.J."/>
            <person name="Wei M.-H."/>
            <person name="Ibegwam C."/>
            <person name="Jalali M."/>
            <person name="Kalush F."/>
            <person name="Karpen G.H."/>
            <person name="Ke Z."/>
            <person name="Kennison J.A."/>
            <person name="Ketchum K.A."/>
            <person name="Kimmel B.E."/>
            <person name="Kodira C.D."/>
            <person name="Kraft C.L."/>
            <person name="Kravitz S."/>
            <person name="Kulp D."/>
            <person name="Lai Z."/>
            <person name="Lasko P."/>
            <person name="Lei Y."/>
            <person name="Levitsky A.A."/>
            <person name="Li J.H."/>
            <person name="Li Z."/>
            <person name="Liang Y."/>
            <person name="Lin X."/>
            <person name="Liu X."/>
            <person name="Mattei B."/>
            <person name="McIntosh T.C."/>
            <person name="McLeod M.P."/>
            <person name="McPherson D."/>
            <person name="Merkulov G."/>
            <person name="Milshina N.V."/>
            <person name="Mobarry C."/>
            <person name="Morris J."/>
            <person name="Moshrefi A."/>
            <person name="Mount S.M."/>
            <person name="Moy M."/>
            <person name="Murphy B."/>
            <person name="Murphy L."/>
            <person name="Muzny D.M."/>
            <person name="Nelson D.L."/>
            <person name="Nelson D.R."/>
            <person name="Nelson K.A."/>
            <person name="Nixon K."/>
            <person name="Nusskern D.R."/>
            <person name="Pacleb J.M."/>
            <person name="Palazzolo M."/>
            <person name="Pittman G.S."/>
            <person name="Pan S."/>
            <person name="Pollard J."/>
            <person name="Puri V."/>
            <person name="Reese M.G."/>
            <person name="Reinert K."/>
            <person name="Remington K."/>
            <person name="Saunders R.D.C."/>
            <person name="Scheeler F."/>
            <person name="Shen H."/>
            <person name="Shue B.C."/>
            <person name="Siden-Kiamos I."/>
            <person name="Simpson M."/>
            <person name="Skupski M.P."/>
            <person name="Smith T.J."/>
            <person name="Spier E."/>
            <person name="Spradling A.C."/>
            <person name="Stapleton M."/>
            <person name="Strong R."/>
            <person name="Sun E."/>
            <person name="Svirskas R."/>
            <person name="Tector C."/>
            <person name="Turner R."/>
            <person name="Venter E."/>
            <person name="Wang A.H."/>
            <person name="Wang X."/>
            <person name="Wang Z.-Y."/>
            <person name="Wassarman D.A."/>
            <person name="Weinstock G.M."/>
            <person name="Weissenbach J."/>
            <person name="Williams S.M."/>
            <person name="Woodage T."/>
            <person name="Worley K.C."/>
            <person name="Wu D."/>
            <person name="Yang S."/>
            <person name="Yao Q.A."/>
            <person name="Ye J."/>
            <person name="Yeh R.-F."/>
            <person name="Zaveri J.S."/>
            <person name="Zhan M."/>
            <person name="Zhang G."/>
            <person name="Zhao Q."/>
            <person name="Zheng L."/>
            <person name="Zheng X.H."/>
            <person name="Zhong F.N."/>
            <person name="Zhong W."/>
            <person name="Zhou X."/>
            <person name="Zhu S.C."/>
            <person name="Zhu X."/>
            <person name="Smith H.O."/>
            <person name="Gibbs R.A."/>
            <person name="Myers E.W."/>
            <person name="Rubin G.M."/>
            <person name="Venter J.C."/>
        </authorList>
    </citation>
    <scope>NUCLEOTIDE SEQUENCE [LARGE SCALE GENOMIC DNA]</scope>
    <source>
        <strain>Berkeley</strain>
    </source>
</reference>
<reference key="2">
    <citation type="journal article" date="2002" name="Genome Biol.">
        <title>Annotation of the Drosophila melanogaster euchromatic genome: a systematic review.</title>
        <authorList>
            <person name="Misra S."/>
            <person name="Crosby M.A."/>
            <person name="Mungall C.J."/>
            <person name="Matthews B.B."/>
            <person name="Campbell K.S."/>
            <person name="Hradecky P."/>
            <person name="Huang Y."/>
            <person name="Kaminker J.S."/>
            <person name="Millburn G.H."/>
            <person name="Prochnik S.E."/>
            <person name="Smith C.D."/>
            <person name="Tupy J.L."/>
            <person name="Whitfield E.J."/>
            <person name="Bayraktaroglu L."/>
            <person name="Berman B.P."/>
            <person name="Bettencourt B.R."/>
            <person name="Celniker S.E."/>
            <person name="de Grey A.D.N.J."/>
            <person name="Drysdale R.A."/>
            <person name="Harris N.L."/>
            <person name="Richter J."/>
            <person name="Russo S."/>
            <person name="Schroeder A.J."/>
            <person name="Shu S.Q."/>
            <person name="Stapleton M."/>
            <person name="Yamada C."/>
            <person name="Ashburner M."/>
            <person name="Gelbart W.M."/>
            <person name="Rubin G.M."/>
            <person name="Lewis S.E."/>
        </authorList>
    </citation>
    <scope>GENOME REANNOTATION</scope>
    <source>
        <strain>Berkeley</strain>
    </source>
</reference>
<reference key="3">
    <citation type="journal article" date="2002" name="Genome Biol.">
        <title>A Drosophila full-length cDNA resource.</title>
        <authorList>
            <person name="Stapleton M."/>
            <person name="Carlson J.W."/>
            <person name="Brokstein P."/>
            <person name="Yu C."/>
            <person name="Champe M."/>
            <person name="George R.A."/>
            <person name="Guarin H."/>
            <person name="Kronmiller B."/>
            <person name="Pacleb J.M."/>
            <person name="Park S."/>
            <person name="Wan K.H."/>
            <person name="Rubin G.M."/>
            <person name="Celniker S.E."/>
        </authorList>
    </citation>
    <scope>NUCLEOTIDE SEQUENCE [LARGE SCALE MRNA]</scope>
    <source>
        <strain>Berkeley</strain>
        <tissue>Embryo</tissue>
    </source>
</reference>
<proteinExistence type="evidence at transcript level"/>
<evidence type="ECO:0000250" key="1">
    <source>
        <dbReference type="UniProtKB" id="P86229"/>
    </source>
</evidence>
<evidence type="ECO:0000250" key="2">
    <source>
        <dbReference type="UniProtKB" id="Q8N6L1"/>
    </source>
</evidence>
<evidence type="ECO:0000255" key="3"/>
<evidence type="ECO:0000305" key="4"/>
<dbReference type="EMBL" id="AE014297">
    <property type="protein sequence ID" value="AAN13389.1"/>
    <property type="molecule type" value="Genomic_DNA"/>
</dbReference>
<dbReference type="EMBL" id="BT001712">
    <property type="protein sequence ID" value="AAN71467.1"/>
    <property type="status" value="ALT_INIT"/>
    <property type="molecule type" value="mRNA"/>
</dbReference>
<dbReference type="RefSeq" id="NP_001287236.1">
    <property type="nucleotide sequence ID" value="NM_001300307.1"/>
</dbReference>
<dbReference type="RefSeq" id="NP_731253.1">
    <property type="nucleotide sequence ID" value="NM_169227.2"/>
</dbReference>
<dbReference type="BioGRID" id="77046">
    <property type="interactions" value="7"/>
</dbReference>
<dbReference type="ComplexPortal" id="CPX-8761">
    <property type="entry name" value="Oligosaccharyltransferase A complex"/>
</dbReference>
<dbReference type="ComplexPortal" id="CPX-8803">
    <property type="entry name" value="Oligosaccharyltransferase B complex"/>
</dbReference>
<dbReference type="FunCoup" id="Q8INQ7">
    <property type="interactions" value="604"/>
</dbReference>
<dbReference type="IntAct" id="Q8INQ7">
    <property type="interactions" value="5"/>
</dbReference>
<dbReference type="STRING" id="7227.FBpp0308428"/>
<dbReference type="PaxDb" id="7227-FBpp0081362"/>
<dbReference type="DNASU" id="318747"/>
<dbReference type="EnsemblMetazoa" id="FBtr0081873">
    <property type="protein sequence ID" value="FBpp0081362"/>
    <property type="gene ID" value="FBgn0051460"/>
</dbReference>
<dbReference type="EnsemblMetazoa" id="FBtr0339327">
    <property type="protein sequence ID" value="FBpp0308428"/>
    <property type="gene ID" value="FBgn0051460"/>
</dbReference>
<dbReference type="GeneID" id="318747"/>
<dbReference type="KEGG" id="dme:Dmel_CG31460"/>
<dbReference type="UCSC" id="CG31460-RA">
    <property type="organism name" value="d. melanogaster"/>
</dbReference>
<dbReference type="AGR" id="FB:FBgn0051460"/>
<dbReference type="FlyBase" id="FBgn0051460">
    <property type="gene designation" value="CG31460"/>
</dbReference>
<dbReference type="VEuPathDB" id="VectorBase:FBgn0051460"/>
<dbReference type="eggNOG" id="KOG4615">
    <property type="taxonomic scope" value="Eukaryota"/>
</dbReference>
<dbReference type="GeneTree" id="ENSGT00390000003552"/>
<dbReference type="HOGENOM" id="CLU_109648_2_0_1"/>
<dbReference type="InParanoid" id="Q8INQ7"/>
<dbReference type="OMA" id="ITIYYMN"/>
<dbReference type="OrthoDB" id="1111004at2759"/>
<dbReference type="PhylomeDB" id="Q8INQ7"/>
<dbReference type="BioGRID-ORCS" id="318747">
    <property type="hits" value="0 hits in 1 CRISPR screen"/>
</dbReference>
<dbReference type="GenomeRNAi" id="318747"/>
<dbReference type="PRO" id="PR:Q8INQ7"/>
<dbReference type="Proteomes" id="UP000000803">
    <property type="component" value="Chromosome 3R"/>
</dbReference>
<dbReference type="Bgee" id="FBgn0051460">
    <property type="expression patterns" value="Expressed in adult middle midgut class II enteroendocrine cell in adult midgut (Drosophila) and 69 other cell types or tissues"/>
</dbReference>
<dbReference type="ExpressionAtlas" id="Q8INQ7">
    <property type="expression patterns" value="baseline and differential"/>
</dbReference>
<dbReference type="GO" id="GO:0008250">
    <property type="term" value="C:oligosaccharyltransferase complex"/>
    <property type="evidence" value="ECO:0000250"/>
    <property type="project" value="FlyBase"/>
</dbReference>
<dbReference type="GO" id="GO:0006487">
    <property type="term" value="P:protein N-linked glycosylation"/>
    <property type="evidence" value="ECO:0000318"/>
    <property type="project" value="GO_Central"/>
</dbReference>
<dbReference type="InterPro" id="IPR018614">
    <property type="entry name" value="KRTCAP2"/>
</dbReference>
<dbReference type="PANTHER" id="PTHR32001">
    <property type="entry name" value="KERATINOCYTE-ASSOCIATED PROTEIN 2"/>
    <property type="match status" value="1"/>
</dbReference>
<dbReference type="PANTHER" id="PTHR32001:SF1">
    <property type="entry name" value="KERATINOCYTE-ASSOCIATED PROTEIN 2"/>
    <property type="match status" value="1"/>
</dbReference>
<dbReference type="Pfam" id="PF09775">
    <property type="entry name" value="Keratin_assoc"/>
    <property type="match status" value="1"/>
</dbReference>
<comment type="function">
    <text evidence="2">Subunit of the oligosaccharyl transferase (OST) complex that catalyzes the initial transfer of a defined glycan (Glc(3)Man(9)GlcNAc(2) in eukaryotes) from the lipid carrier dolichol-pyrophosphate to an asparagine residue within an Asn-X-Ser/Thr consensus motif in nascent polypeptide chains, the first step in protein N-glycosylation. N-glycosylation occurs cotranslationally and the complex associates with the Sec61 complex at the channel-forming translocon complex that mediates protein translocation across the endoplasmic reticulum (ER). All subunits are required for a maximal enzyme activity.</text>
</comment>
<comment type="subunit">
    <text evidence="1">Component of the oligosaccharyltransferase (OST) complex.</text>
</comment>
<comment type="subcellular location">
    <subcellularLocation>
        <location evidence="4">Membrane</location>
        <topology evidence="4">Multi-pass membrane protein</topology>
    </subcellularLocation>
</comment>
<comment type="similarity">
    <text evidence="4">Belongs to the KRTCAP2 family.</text>
</comment>
<comment type="sequence caution" evidence="4">
    <conflict type="erroneous initiation">
        <sequence resource="EMBL-CDS" id="AAN71467"/>
    </conflict>
</comment>
<name>KTAP2_DROME</name>
<organism>
    <name type="scientific">Drosophila melanogaster</name>
    <name type="common">Fruit fly</name>
    <dbReference type="NCBI Taxonomy" id="7227"/>
    <lineage>
        <taxon>Eukaryota</taxon>
        <taxon>Metazoa</taxon>
        <taxon>Ecdysozoa</taxon>
        <taxon>Arthropoda</taxon>
        <taxon>Hexapoda</taxon>
        <taxon>Insecta</taxon>
        <taxon>Pterygota</taxon>
        <taxon>Neoptera</taxon>
        <taxon>Endopterygota</taxon>
        <taxon>Diptera</taxon>
        <taxon>Brachycera</taxon>
        <taxon>Muscomorpha</taxon>
        <taxon>Ephydroidea</taxon>
        <taxon>Drosophilidae</taxon>
        <taxon>Drosophila</taxon>
        <taxon>Sophophora</taxon>
    </lineage>
</organism>
<accession>Q8INQ7</accession>
<accession>Q8IGM0</accession>
<gene>
    <name type="ORF">CG31460</name>
</gene>
<keyword id="KW-0472">Membrane</keyword>
<keyword id="KW-1185">Reference proteome</keyword>
<keyword id="KW-0812">Transmembrane</keyword>
<keyword id="KW-1133">Transmembrane helix</keyword>
<sequence>MSASVSSKSTVVSSIISGLLSIVLFGTLRFCSEWFNDSQLRVLLGGYLFSWVFILSLTCVSNAEMVVFGQDFQAKLLPEIIFCLSLTVAAAGLVHRVCATTSVLFSLVGLYFLNRISTKYYSVQVPSVDAPTTRKGGKKFK</sequence>
<protein>
    <recommendedName>
        <fullName>Protein KRTCAP2 homolog</fullName>
    </recommendedName>
    <alternativeName>
        <fullName>Dolichyl-diphosphooligosaccharide--protein glycosyltransferase subunit KCP2</fullName>
        <shortName>Oligosaccharyl transferase subunit KCP2</shortName>
    </alternativeName>
</protein>
<feature type="chain" id="PRO_0000327902" description="Protein KRTCAP2 homolog">
    <location>
        <begin position="1"/>
        <end position="141"/>
    </location>
</feature>
<feature type="transmembrane region" description="Helical" evidence="3">
    <location>
        <begin position="11"/>
        <end position="31"/>
    </location>
</feature>
<feature type="transmembrane region" description="Helical" evidence="3">
    <location>
        <begin position="42"/>
        <end position="62"/>
    </location>
</feature>
<feature type="transmembrane region" description="Helical" evidence="3">
    <location>
        <begin position="74"/>
        <end position="94"/>
    </location>
</feature>
<feature type="transmembrane region" description="Helical" evidence="3">
    <location>
        <begin position="97"/>
        <end position="117"/>
    </location>
</feature>